<comment type="function">
    <text evidence="2 3">Catalyzes the transfer of a farnesyl or geranyl-geranyl moiety from farnesyl or geranyl-geranyl diphosphate to a cysteine at the fourth position from the C-terminus of several proteins having the C-terminal sequence Cys-aliphatic-aliphatic-X. The alpha(cwp1) subunit is thought to participate in a stable complex with the substrate. The beta(cpp1 or cwg2) subunits bind the peptide substrate.</text>
</comment>
<comment type="catalytic activity">
    <reaction evidence="2">
        <text>L-cysteinyl-[protein] + (2E,6E)-farnesyl diphosphate = S-(2E,6E)-farnesyl-L-cysteinyl-[protein] + diphosphate</text>
        <dbReference type="Rhea" id="RHEA:13345"/>
        <dbReference type="Rhea" id="RHEA-COMP:10131"/>
        <dbReference type="Rhea" id="RHEA-COMP:11535"/>
        <dbReference type="ChEBI" id="CHEBI:29950"/>
        <dbReference type="ChEBI" id="CHEBI:33019"/>
        <dbReference type="ChEBI" id="CHEBI:86019"/>
        <dbReference type="ChEBI" id="CHEBI:175763"/>
        <dbReference type="EC" id="2.5.1.58"/>
    </reaction>
    <physiologicalReaction direction="left-to-right" evidence="2">
        <dbReference type="Rhea" id="RHEA:13346"/>
    </physiologicalReaction>
</comment>
<comment type="catalytic activity">
    <reaction evidence="3">
        <text>geranylgeranyl diphosphate + L-cysteinyl-[protein] = S-geranylgeranyl-L-cysteinyl-[protein] + diphosphate</text>
        <dbReference type="Rhea" id="RHEA:21240"/>
        <dbReference type="Rhea" id="RHEA-COMP:10131"/>
        <dbReference type="Rhea" id="RHEA-COMP:11537"/>
        <dbReference type="ChEBI" id="CHEBI:29950"/>
        <dbReference type="ChEBI" id="CHEBI:33019"/>
        <dbReference type="ChEBI" id="CHEBI:57533"/>
        <dbReference type="ChEBI" id="CHEBI:86021"/>
        <dbReference type="EC" id="2.5.1.59"/>
    </reaction>
    <physiologicalReaction direction="left-to-right" evidence="3">
        <dbReference type="Rhea" id="RHEA:21241"/>
    </physiologicalReaction>
</comment>
<comment type="cofactor">
    <cofactor evidence="1">
        <name>Mg(2+)</name>
        <dbReference type="ChEBI" id="CHEBI:18420"/>
    </cofactor>
</comment>
<comment type="subunit">
    <text evidence="2 3">Heterodimer of an alpha(cwp1) and a beta(cpp1 or cwg2) subunit.</text>
</comment>
<comment type="similarity">
    <text evidence="4">Belongs to the protein prenyltransferase subunit alpha family.</text>
</comment>
<keyword id="KW-0460">Magnesium</keyword>
<keyword id="KW-0637">Prenyltransferase</keyword>
<keyword id="KW-1185">Reference proteome</keyword>
<keyword id="KW-0677">Repeat</keyword>
<keyword id="KW-0808">Transferase</keyword>
<sequence>MDPIDPELNEILDFTEYGPLTPIPQDDGENPLAKICYTTGYEQGMAYFRAIMAKKEYSLRALNLTGFLIMNNPAHYTVWAYRFQILNHTPSYIDNELEWLDEIAEDFQKNYQVWHHRQKILSLTKNYERELEFTKKMFEIDSKNYHVWSYRVWILQNFNDYSQELKLTNELLEKDIYNNSAWNHRFYVLFETSKVVSWSLEEELNYLKDKILFAPDNQSAWNYLCGVLDKSGPSKLDNLIANLRKNLPALHKPLLEFLAMYEPSSSEEIYQKLANEVDVPHAALWTWMSQRSNP</sequence>
<protein>
    <recommendedName>
        <fullName>Protein farnesyltransferase/geranylgeranyltransferase type-1 subunit alpha</fullName>
        <ecNumber evidence="2">2.5.1.58</ecNumber>
        <ecNumber evidence="3">2.5.1.59</ecNumber>
    </recommendedName>
    <alternativeName>
        <fullName>CAAX farnesyltransferase subunit alpha</fullName>
    </alternativeName>
    <alternativeName>
        <fullName>FTase-alpha</fullName>
    </alternativeName>
    <alternativeName>
        <fullName>Ras proteins prenyltransferase subunit alpha</fullName>
    </alternativeName>
    <alternativeName>
        <fullName>Type I protein geranyl-geranyltransferase subunit alpha</fullName>
        <shortName>GGTase-I-alpha</shortName>
    </alternativeName>
</protein>
<organism>
    <name type="scientific">Schizosaccharomyces pombe (strain 972 / ATCC 24843)</name>
    <name type="common">Fission yeast</name>
    <dbReference type="NCBI Taxonomy" id="284812"/>
    <lineage>
        <taxon>Eukaryota</taxon>
        <taxon>Fungi</taxon>
        <taxon>Dikarya</taxon>
        <taxon>Ascomycota</taxon>
        <taxon>Taphrinomycotina</taxon>
        <taxon>Schizosaccharomycetes</taxon>
        <taxon>Schizosaccharomycetales</taxon>
        <taxon>Schizosaccharomycetaceae</taxon>
        <taxon>Schizosaccharomyces</taxon>
    </lineage>
</organism>
<feature type="chain" id="PRO_0000119753" description="Protein farnesyltransferase/geranylgeranyltransferase type-1 subunit alpha">
    <location>
        <begin position="1"/>
        <end position="294"/>
    </location>
</feature>
<feature type="repeat" description="PFTA 1">
    <location>
        <begin position="57"/>
        <end position="91"/>
    </location>
</feature>
<feature type="repeat" description="PFTA 2">
    <location>
        <begin position="92"/>
        <end position="125"/>
    </location>
</feature>
<feature type="repeat" description="PFTA 3">
    <location>
        <begin position="126"/>
        <end position="160"/>
    </location>
</feature>
<feature type="repeat" description="PFTA 4">
    <location>
        <begin position="161"/>
        <end position="194"/>
    </location>
</feature>
<feature type="repeat" description="PFTA 5">
    <location>
        <begin position="199"/>
        <end position="233"/>
    </location>
</feature>
<accession>O60052</accession>
<name>FNTA_SCHPO</name>
<proteinExistence type="evidence at protein level"/>
<reference key="1">
    <citation type="journal article" date="1998" name="Mol. Microbiol.">
        <title>Characterization of the geranylgeranyl transferase type I from Schizosaccharomyces pombe.</title>
        <authorList>
            <person name="Arellano M."/>
            <person name="Coll P.M."/>
            <person name="Yang W."/>
            <person name="Duran A."/>
            <person name="Tamanoi F."/>
            <person name="Perez P."/>
        </authorList>
    </citation>
    <scope>NUCLEOTIDE SEQUENCE [GENOMIC DNA]</scope>
    <scope>FUNCTION</scope>
    <scope>CATALYTIC ACTIVITY</scope>
    <scope>SUBUNIT</scope>
    <source>
        <strain>972 / ATCC 24843</strain>
    </source>
</reference>
<reference key="2">
    <citation type="journal article" date="2002" name="Nature">
        <title>The genome sequence of Schizosaccharomyces pombe.</title>
        <authorList>
            <person name="Wood V."/>
            <person name="Gwilliam R."/>
            <person name="Rajandream M.A."/>
            <person name="Lyne M.H."/>
            <person name="Lyne R."/>
            <person name="Stewart A."/>
            <person name="Sgouros J.G."/>
            <person name="Peat N."/>
            <person name="Hayles J."/>
            <person name="Baker S.G."/>
            <person name="Basham D."/>
            <person name="Bowman S."/>
            <person name="Brooks K."/>
            <person name="Brown D."/>
            <person name="Brown S."/>
            <person name="Chillingworth T."/>
            <person name="Churcher C.M."/>
            <person name="Collins M."/>
            <person name="Connor R."/>
            <person name="Cronin A."/>
            <person name="Davis P."/>
            <person name="Feltwell T."/>
            <person name="Fraser A."/>
            <person name="Gentles S."/>
            <person name="Goble A."/>
            <person name="Hamlin N."/>
            <person name="Harris D.E."/>
            <person name="Hidalgo J."/>
            <person name="Hodgson G."/>
            <person name="Holroyd S."/>
            <person name="Hornsby T."/>
            <person name="Howarth S."/>
            <person name="Huckle E.J."/>
            <person name="Hunt S."/>
            <person name="Jagels K."/>
            <person name="James K.D."/>
            <person name="Jones L."/>
            <person name="Jones M."/>
            <person name="Leather S."/>
            <person name="McDonald S."/>
            <person name="McLean J."/>
            <person name="Mooney P."/>
            <person name="Moule S."/>
            <person name="Mungall K.L."/>
            <person name="Murphy L.D."/>
            <person name="Niblett D."/>
            <person name="Odell C."/>
            <person name="Oliver K."/>
            <person name="O'Neil S."/>
            <person name="Pearson D."/>
            <person name="Quail M.A."/>
            <person name="Rabbinowitsch E."/>
            <person name="Rutherford K.M."/>
            <person name="Rutter S."/>
            <person name="Saunders D."/>
            <person name="Seeger K."/>
            <person name="Sharp S."/>
            <person name="Skelton J."/>
            <person name="Simmonds M.N."/>
            <person name="Squares R."/>
            <person name="Squares S."/>
            <person name="Stevens K."/>
            <person name="Taylor K."/>
            <person name="Taylor R.G."/>
            <person name="Tivey A."/>
            <person name="Walsh S.V."/>
            <person name="Warren T."/>
            <person name="Whitehead S."/>
            <person name="Woodward J.R."/>
            <person name="Volckaert G."/>
            <person name="Aert R."/>
            <person name="Robben J."/>
            <person name="Grymonprez B."/>
            <person name="Weltjens I."/>
            <person name="Vanstreels E."/>
            <person name="Rieger M."/>
            <person name="Schaefer M."/>
            <person name="Mueller-Auer S."/>
            <person name="Gabel C."/>
            <person name="Fuchs M."/>
            <person name="Duesterhoeft A."/>
            <person name="Fritzc C."/>
            <person name="Holzer E."/>
            <person name="Moestl D."/>
            <person name="Hilbert H."/>
            <person name="Borzym K."/>
            <person name="Langer I."/>
            <person name="Beck A."/>
            <person name="Lehrach H."/>
            <person name="Reinhardt R."/>
            <person name="Pohl T.M."/>
            <person name="Eger P."/>
            <person name="Zimmermann W."/>
            <person name="Wedler H."/>
            <person name="Wambutt R."/>
            <person name="Purnelle B."/>
            <person name="Goffeau A."/>
            <person name="Cadieu E."/>
            <person name="Dreano S."/>
            <person name="Gloux S."/>
            <person name="Lelaure V."/>
            <person name="Mottier S."/>
            <person name="Galibert F."/>
            <person name="Aves S.J."/>
            <person name="Xiang Z."/>
            <person name="Hunt C."/>
            <person name="Moore K."/>
            <person name="Hurst S.M."/>
            <person name="Lucas M."/>
            <person name="Rochet M."/>
            <person name="Gaillardin C."/>
            <person name="Tallada V.A."/>
            <person name="Garzon A."/>
            <person name="Thode G."/>
            <person name="Daga R.R."/>
            <person name="Cruzado L."/>
            <person name="Jimenez J."/>
            <person name="Sanchez M."/>
            <person name="del Rey F."/>
            <person name="Benito J."/>
            <person name="Dominguez A."/>
            <person name="Revuelta J.L."/>
            <person name="Moreno S."/>
            <person name="Armstrong J."/>
            <person name="Forsburg S.L."/>
            <person name="Cerutti L."/>
            <person name="Lowe T."/>
            <person name="McCombie W.R."/>
            <person name="Paulsen I."/>
            <person name="Potashkin J."/>
            <person name="Shpakovski G.V."/>
            <person name="Ussery D."/>
            <person name="Barrell B.G."/>
            <person name="Nurse P."/>
        </authorList>
    </citation>
    <scope>NUCLEOTIDE SEQUENCE [LARGE SCALE GENOMIC DNA]</scope>
    <source>
        <strain>972 / ATCC 24843</strain>
    </source>
</reference>
<reference key="3">
    <citation type="journal article" date="2000" name="J. Biol. Chem.">
        <title>Protein farnesylation is critical for maintaining normal cell morphology and canavanine resistance in Schizosaccharomyces pombe.</title>
        <authorList>
            <person name="Yang W."/>
            <person name="Urano J."/>
            <person name="Tamanoi F."/>
        </authorList>
    </citation>
    <scope>FUNCTION</scope>
    <scope>CATALYTIC ACTIVITY</scope>
    <scope>SUBUNIT</scope>
</reference>
<evidence type="ECO:0000250" key="1">
    <source>
        <dbReference type="UniProtKB" id="P29703"/>
    </source>
</evidence>
<evidence type="ECO:0000269" key="2">
    <source>
    </source>
</evidence>
<evidence type="ECO:0000269" key="3">
    <source>
    </source>
</evidence>
<evidence type="ECO:0000305" key="4"/>
<gene>
    <name type="primary">cwp1</name>
    <name type="ORF">SPAPB1A10.04c</name>
</gene>
<dbReference type="EC" id="2.5.1.58" evidence="2"/>
<dbReference type="EC" id="2.5.1.59" evidence="3"/>
<dbReference type="EMBL" id="AJ223304">
    <property type="protein sequence ID" value="CAA11246.1"/>
    <property type="molecule type" value="Genomic_DNA"/>
</dbReference>
<dbReference type="EMBL" id="CU329670">
    <property type="protein sequence ID" value="CAC21477.1"/>
    <property type="molecule type" value="Genomic_DNA"/>
</dbReference>
<dbReference type="RefSeq" id="NP_593518.1">
    <property type="nucleotide sequence ID" value="NM_001018952.2"/>
</dbReference>
<dbReference type="SMR" id="O60052"/>
<dbReference type="BioGRID" id="279575">
    <property type="interactions" value="4"/>
</dbReference>
<dbReference type="ComplexPortal" id="CPX-25759">
    <property type="entry name" value="Protein farnesyltransferase complex"/>
</dbReference>
<dbReference type="ComplexPortal" id="CPX-25760">
    <property type="entry name" value="Protein geranylgeranyltransferase complex"/>
</dbReference>
<dbReference type="FunCoup" id="O60052">
    <property type="interactions" value="148"/>
</dbReference>
<dbReference type="STRING" id="284812.O60052"/>
<dbReference type="PaxDb" id="4896-SPAPB1A10.04c.1"/>
<dbReference type="EnsemblFungi" id="SPAPB1A10.04c.1">
    <property type="protein sequence ID" value="SPAPB1A10.04c.1:pep"/>
    <property type="gene ID" value="SPAPB1A10.04c"/>
</dbReference>
<dbReference type="GeneID" id="2543143"/>
<dbReference type="KEGG" id="spo:2543143"/>
<dbReference type="PomBase" id="SPAPB1A10.04c">
    <property type="gene designation" value="cwp1"/>
</dbReference>
<dbReference type="VEuPathDB" id="FungiDB:SPAPB1A10.04c"/>
<dbReference type="eggNOG" id="KOG0530">
    <property type="taxonomic scope" value="Eukaryota"/>
</dbReference>
<dbReference type="HOGENOM" id="CLU_026582_1_1_1"/>
<dbReference type="InParanoid" id="O60052"/>
<dbReference type="OMA" id="WAIRTFN"/>
<dbReference type="PhylomeDB" id="O60052"/>
<dbReference type="Reactome" id="R-SPO-9648002">
    <property type="pathway name" value="RAS processing"/>
</dbReference>
<dbReference type="PRO" id="PR:O60052"/>
<dbReference type="Proteomes" id="UP000002485">
    <property type="component" value="Chromosome I"/>
</dbReference>
<dbReference type="GO" id="GO:0005953">
    <property type="term" value="C:CAAX-protein geranylgeranyltransferase complex"/>
    <property type="evidence" value="ECO:0000314"/>
    <property type="project" value="PomBase"/>
</dbReference>
<dbReference type="GO" id="GO:0005737">
    <property type="term" value="C:cytoplasm"/>
    <property type="evidence" value="ECO:0000318"/>
    <property type="project" value="GO_Central"/>
</dbReference>
<dbReference type="GO" id="GO:0005634">
    <property type="term" value="C:nucleus"/>
    <property type="evidence" value="ECO:0007005"/>
    <property type="project" value="PomBase"/>
</dbReference>
<dbReference type="GO" id="GO:0005965">
    <property type="term" value="C:protein farnesyltransferase complex"/>
    <property type="evidence" value="ECO:0000250"/>
    <property type="project" value="UniProtKB"/>
</dbReference>
<dbReference type="GO" id="GO:0004662">
    <property type="term" value="F:CAAX-protein geranylgeranyltransferase activity"/>
    <property type="evidence" value="ECO:0007669"/>
    <property type="project" value="UniProtKB-EC"/>
</dbReference>
<dbReference type="GO" id="GO:0004660">
    <property type="term" value="F:protein farnesyltransferase activity"/>
    <property type="evidence" value="ECO:0000314"/>
    <property type="project" value="PomBase"/>
</dbReference>
<dbReference type="GO" id="GO:0004663">
    <property type="term" value="F:Rab geranylgeranyltransferase activity"/>
    <property type="evidence" value="ECO:0000255"/>
    <property type="project" value="PomBase"/>
</dbReference>
<dbReference type="GO" id="GO:0007323">
    <property type="term" value="P:peptide pheromone maturation"/>
    <property type="evidence" value="ECO:0000318"/>
    <property type="project" value="GO_Central"/>
</dbReference>
<dbReference type="GO" id="GO:0018343">
    <property type="term" value="P:protein farnesylation"/>
    <property type="evidence" value="ECO:0000250"/>
    <property type="project" value="UniProtKB"/>
</dbReference>
<dbReference type="GO" id="GO:0018344">
    <property type="term" value="P:protein geranylgeranylation"/>
    <property type="evidence" value="ECO:0000250"/>
    <property type="project" value="UniProtKB"/>
</dbReference>
<dbReference type="GO" id="GO:0072659">
    <property type="term" value="P:protein localization to plasma membrane"/>
    <property type="evidence" value="ECO:0000305"/>
    <property type="project" value="PomBase"/>
</dbReference>
<dbReference type="FunFam" id="1.25.40.120:FF:000026">
    <property type="entry name" value="FarNesylTransferase, Alpha subunit"/>
    <property type="match status" value="1"/>
</dbReference>
<dbReference type="Gene3D" id="1.25.40.120">
    <property type="entry name" value="Protein prenylyltransferase"/>
    <property type="match status" value="1"/>
</dbReference>
<dbReference type="InterPro" id="IPR002088">
    <property type="entry name" value="Prenyl_trans_a"/>
</dbReference>
<dbReference type="PANTHER" id="PTHR11129">
    <property type="entry name" value="PROTEIN FARNESYLTRANSFERASE ALPHA SUBUNIT/RAB GERANYLGERANYL TRANSFERASE ALPHA SUBUNIT"/>
    <property type="match status" value="1"/>
</dbReference>
<dbReference type="PANTHER" id="PTHR11129:SF1">
    <property type="entry name" value="PROTEIN FARNESYLTRANSFERASE_GERANYLGERANYLTRANSFERASE TYPE-1 SUBUNIT ALPHA"/>
    <property type="match status" value="1"/>
</dbReference>
<dbReference type="Pfam" id="PF01239">
    <property type="entry name" value="PPTA"/>
    <property type="match status" value="5"/>
</dbReference>
<dbReference type="SUPFAM" id="SSF48439">
    <property type="entry name" value="Protein prenylyltransferase"/>
    <property type="match status" value="1"/>
</dbReference>
<dbReference type="PROSITE" id="PS51147">
    <property type="entry name" value="PFTA"/>
    <property type="match status" value="5"/>
</dbReference>